<dbReference type="EMBL" id="M27652">
    <property type="protein sequence ID" value="AAA49404.1"/>
    <property type="molecule type" value="mRNA"/>
</dbReference>
<dbReference type="PIR" id="JL0068">
    <property type="entry name" value="A60627"/>
</dbReference>
<dbReference type="SMR" id="P13152"/>
<dbReference type="GlyCosmos" id="P13152">
    <property type="glycosylation" value="2 sites, No reported glycans"/>
</dbReference>
<dbReference type="GO" id="GO:0005615">
    <property type="term" value="C:extracellular space"/>
    <property type="evidence" value="ECO:0007669"/>
    <property type="project" value="TreeGrafter"/>
</dbReference>
<dbReference type="GO" id="GO:0016914">
    <property type="term" value="C:follicle-stimulating hormone complex"/>
    <property type="evidence" value="ECO:0007669"/>
    <property type="project" value="TreeGrafter"/>
</dbReference>
<dbReference type="GO" id="GO:0016913">
    <property type="term" value="F:follicle-stimulating hormone activity"/>
    <property type="evidence" value="ECO:0007669"/>
    <property type="project" value="TreeGrafter"/>
</dbReference>
<dbReference type="GO" id="GO:0010893">
    <property type="term" value="P:positive regulation of steroid biosynthetic process"/>
    <property type="evidence" value="ECO:0007669"/>
    <property type="project" value="TreeGrafter"/>
</dbReference>
<dbReference type="GO" id="GO:0006590">
    <property type="term" value="P:thyroid hormone generation"/>
    <property type="evidence" value="ECO:0007669"/>
    <property type="project" value="TreeGrafter"/>
</dbReference>
<dbReference type="FunFam" id="2.10.90.10:FF:000011">
    <property type="entry name" value="Glycoprotein hormones alpha chain"/>
    <property type="match status" value="1"/>
</dbReference>
<dbReference type="Gene3D" id="2.10.90.10">
    <property type="entry name" value="Cystine-knot cytokines"/>
    <property type="match status" value="1"/>
</dbReference>
<dbReference type="InterPro" id="IPR029034">
    <property type="entry name" value="Cystine-knot_cytokine"/>
</dbReference>
<dbReference type="InterPro" id="IPR000476">
    <property type="entry name" value="Glyco_hormone"/>
</dbReference>
<dbReference type="PANTHER" id="PTHR11509">
    <property type="entry name" value="GLYCOPROTEIN HORMONE ALPHA CHAIN"/>
    <property type="match status" value="1"/>
</dbReference>
<dbReference type="PANTHER" id="PTHR11509:SF0">
    <property type="entry name" value="GLYCOPROTEIN HORMONES ALPHA CHAIN"/>
    <property type="match status" value="1"/>
</dbReference>
<dbReference type="Pfam" id="PF00236">
    <property type="entry name" value="Hormone_6"/>
    <property type="match status" value="1"/>
</dbReference>
<dbReference type="PRINTS" id="PR00274">
    <property type="entry name" value="GLYCOHORMONE"/>
</dbReference>
<dbReference type="SMART" id="SM00067">
    <property type="entry name" value="GHA"/>
    <property type="match status" value="1"/>
</dbReference>
<dbReference type="SUPFAM" id="SSF57501">
    <property type="entry name" value="Cystine-knot cytokines"/>
    <property type="match status" value="1"/>
</dbReference>
<dbReference type="PROSITE" id="PS00779">
    <property type="entry name" value="GLYCO_HORMONE_ALPHA_1"/>
    <property type="match status" value="1"/>
</dbReference>
<dbReference type="PROSITE" id="PS00780">
    <property type="entry name" value="GLYCO_HORMONE_ALPHA_2"/>
    <property type="match status" value="1"/>
</dbReference>
<dbReference type="PROSITE" id="PS50277">
    <property type="entry name" value="GLYCO_HORMONE_ALPHA_3"/>
    <property type="match status" value="1"/>
</dbReference>
<accession>P13152</accession>
<proteinExistence type="evidence at transcript level"/>
<feature type="signal peptide">
    <location>
        <begin position="1" status="less than"/>
        <end position="13"/>
    </location>
</feature>
<feature type="chain" id="PRO_0000011669" description="Glycoprotein hormones alpha chain 1">
    <location>
        <begin position="14"/>
        <end position="108"/>
    </location>
</feature>
<feature type="glycosylation site" description="N-linked (GlcNAc...) asparagine" evidence="2">
    <location>
        <position position="69"/>
    </location>
</feature>
<feature type="glycosylation site" description="N-linked (GlcNAc...) asparagine" evidence="2">
    <location>
        <position position="94"/>
    </location>
</feature>
<feature type="disulfide bond" evidence="1">
    <location>
        <begin position="24"/>
        <end position="48"/>
    </location>
</feature>
<feature type="disulfide bond" evidence="1">
    <location>
        <begin position="27"/>
        <end position="77"/>
    </location>
</feature>
<feature type="disulfide bond" evidence="1">
    <location>
        <begin position="45"/>
        <end position="98"/>
    </location>
</feature>
<feature type="disulfide bond" evidence="1">
    <location>
        <begin position="49"/>
        <end position="100"/>
    </location>
</feature>
<feature type="disulfide bond" evidence="1">
    <location>
        <begin position="76"/>
        <end position="103"/>
    </location>
</feature>
<feature type="non-terminal residue">
    <location>
        <position position="1"/>
    </location>
</feature>
<sequence length="108" mass="12047">SLILSILLYMADSYQNSDMTNVGCEECKLKENKVFSNPGAPVYQCTGCCFSRAYPTPLQSKKAMLVPKNITSEATCCVAKEGERVVVDNIKLTNHTECWCNTCYHHKS</sequence>
<protein>
    <recommendedName>
        <fullName>Glycoprotein hormones alpha chain 1</fullName>
    </recommendedName>
    <alternativeName>
        <fullName>GTH-alpha</fullName>
    </alternativeName>
    <alternativeName>
        <fullName>Gonadotropin 1 alpha chain</fullName>
    </alternativeName>
</protein>
<comment type="function">
    <text>Involved in gametogenesis and steroidogenesis.</text>
</comment>
<comment type="subunit">
    <text>Heterodimer of an alpha and a beta chain.</text>
</comment>
<comment type="subcellular location">
    <subcellularLocation>
        <location>Secreted</location>
    </subcellularLocation>
</comment>
<comment type="similarity">
    <text evidence="3">Belongs to the glycoprotein hormones subunit alpha family.</text>
</comment>
<keyword id="KW-1015">Disulfide bond</keyword>
<keyword id="KW-0325">Glycoprotein</keyword>
<keyword id="KW-0372">Hormone</keyword>
<keyword id="KW-0964">Secreted</keyword>
<keyword id="KW-0732">Signal</keyword>
<evidence type="ECO:0000250" key="1"/>
<evidence type="ECO:0000255" key="2"/>
<evidence type="ECO:0000305" key="3"/>
<name>GLHA1_ONCKE</name>
<reference key="1">
    <citation type="journal article" date="1988" name="Comp. Biochem. Physiol.">
        <title>Primary structure of two mRNAs encoding putative salmon alpha-subunits of pituitary glycoprotein hormone.</title>
        <authorList>
            <person name="Kitahara N."/>
            <person name="Nishizawa T."/>
            <person name="Gatanaga T."/>
            <person name="Okazaki H."/>
            <person name="Andoh T."/>
            <person name="Soma G."/>
        </authorList>
    </citation>
    <scope>NUCLEOTIDE SEQUENCE [MRNA]</scope>
</reference>
<organism>
    <name type="scientific">Oncorhynchus keta</name>
    <name type="common">Chum salmon</name>
    <name type="synonym">Salmo keta</name>
    <dbReference type="NCBI Taxonomy" id="8018"/>
    <lineage>
        <taxon>Eukaryota</taxon>
        <taxon>Metazoa</taxon>
        <taxon>Chordata</taxon>
        <taxon>Craniata</taxon>
        <taxon>Vertebrata</taxon>
        <taxon>Euteleostomi</taxon>
        <taxon>Actinopterygii</taxon>
        <taxon>Neopterygii</taxon>
        <taxon>Teleostei</taxon>
        <taxon>Protacanthopterygii</taxon>
        <taxon>Salmoniformes</taxon>
        <taxon>Salmonidae</taxon>
        <taxon>Salmoninae</taxon>
        <taxon>Oncorhynchus</taxon>
    </lineage>
</organism>
<gene>
    <name type="primary">cgaa</name>
</gene>